<gene>
    <name evidence="1" type="primary">rpoA</name>
    <name type="ordered locus">H16_A3458</name>
</gene>
<dbReference type="EC" id="2.7.7.6" evidence="1"/>
<dbReference type="EMBL" id="AM260479">
    <property type="protein sequence ID" value="CAJ94526.1"/>
    <property type="molecule type" value="Genomic_DNA"/>
</dbReference>
<dbReference type="RefSeq" id="WP_010812374.1">
    <property type="nucleotide sequence ID" value="NZ_CP039287.1"/>
</dbReference>
<dbReference type="SMR" id="Q0K645"/>
<dbReference type="STRING" id="381666.H16_A3458"/>
<dbReference type="KEGG" id="reh:H16_A3458"/>
<dbReference type="eggNOG" id="COG0202">
    <property type="taxonomic scope" value="Bacteria"/>
</dbReference>
<dbReference type="HOGENOM" id="CLU_053084_0_0_4"/>
<dbReference type="OrthoDB" id="9805706at2"/>
<dbReference type="Proteomes" id="UP000008210">
    <property type="component" value="Chromosome 1"/>
</dbReference>
<dbReference type="GO" id="GO:0005737">
    <property type="term" value="C:cytoplasm"/>
    <property type="evidence" value="ECO:0007669"/>
    <property type="project" value="UniProtKB-ARBA"/>
</dbReference>
<dbReference type="GO" id="GO:0000428">
    <property type="term" value="C:DNA-directed RNA polymerase complex"/>
    <property type="evidence" value="ECO:0007669"/>
    <property type="project" value="UniProtKB-KW"/>
</dbReference>
<dbReference type="GO" id="GO:0003677">
    <property type="term" value="F:DNA binding"/>
    <property type="evidence" value="ECO:0007669"/>
    <property type="project" value="UniProtKB-UniRule"/>
</dbReference>
<dbReference type="GO" id="GO:0003899">
    <property type="term" value="F:DNA-directed RNA polymerase activity"/>
    <property type="evidence" value="ECO:0007669"/>
    <property type="project" value="UniProtKB-UniRule"/>
</dbReference>
<dbReference type="GO" id="GO:0046983">
    <property type="term" value="F:protein dimerization activity"/>
    <property type="evidence" value="ECO:0007669"/>
    <property type="project" value="InterPro"/>
</dbReference>
<dbReference type="GO" id="GO:0006351">
    <property type="term" value="P:DNA-templated transcription"/>
    <property type="evidence" value="ECO:0007669"/>
    <property type="project" value="UniProtKB-UniRule"/>
</dbReference>
<dbReference type="CDD" id="cd06928">
    <property type="entry name" value="RNAP_alpha_NTD"/>
    <property type="match status" value="1"/>
</dbReference>
<dbReference type="FunFam" id="1.10.150.20:FF:000001">
    <property type="entry name" value="DNA-directed RNA polymerase subunit alpha"/>
    <property type="match status" value="1"/>
</dbReference>
<dbReference type="FunFam" id="2.170.120.12:FF:000001">
    <property type="entry name" value="DNA-directed RNA polymerase subunit alpha"/>
    <property type="match status" value="1"/>
</dbReference>
<dbReference type="Gene3D" id="1.10.150.20">
    <property type="entry name" value="5' to 3' exonuclease, C-terminal subdomain"/>
    <property type="match status" value="1"/>
</dbReference>
<dbReference type="Gene3D" id="2.170.120.12">
    <property type="entry name" value="DNA-directed RNA polymerase, insert domain"/>
    <property type="match status" value="1"/>
</dbReference>
<dbReference type="Gene3D" id="3.30.1360.10">
    <property type="entry name" value="RNA polymerase, RBP11-like subunit"/>
    <property type="match status" value="1"/>
</dbReference>
<dbReference type="HAMAP" id="MF_00059">
    <property type="entry name" value="RNApol_bact_RpoA"/>
    <property type="match status" value="1"/>
</dbReference>
<dbReference type="InterPro" id="IPR011262">
    <property type="entry name" value="DNA-dir_RNA_pol_insert"/>
</dbReference>
<dbReference type="InterPro" id="IPR011263">
    <property type="entry name" value="DNA-dir_RNA_pol_RpoA/D/Rpb3"/>
</dbReference>
<dbReference type="InterPro" id="IPR011773">
    <property type="entry name" value="DNA-dir_RpoA"/>
</dbReference>
<dbReference type="InterPro" id="IPR036603">
    <property type="entry name" value="RBP11-like"/>
</dbReference>
<dbReference type="InterPro" id="IPR011260">
    <property type="entry name" value="RNAP_asu_C"/>
</dbReference>
<dbReference type="InterPro" id="IPR036643">
    <property type="entry name" value="RNApol_insert_sf"/>
</dbReference>
<dbReference type="NCBIfam" id="NF003513">
    <property type="entry name" value="PRK05182.1-2"/>
    <property type="match status" value="1"/>
</dbReference>
<dbReference type="NCBIfam" id="NF003519">
    <property type="entry name" value="PRK05182.2-5"/>
    <property type="match status" value="1"/>
</dbReference>
<dbReference type="NCBIfam" id="TIGR02027">
    <property type="entry name" value="rpoA"/>
    <property type="match status" value="1"/>
</dbReference>
<dbReference type="Pfam" id="PF01000">
    <property type="entry name" value="RNA_pol_A_bac"/>
    <property type="match status" value="1"/>
</dbReference>
<dbReference type="Pfam" id="PF03118">
    <property type="entry name" value="RNA_pol_A_CTD"/>
    <property type="match status" value="1"/>
</dbReference>
<dbReference type="Pfam" id="PF01193">
    <property type="entry name" value="RNA_pol_L"/>
    <property type="match status" value="1"/>
</dbReference>
<dbReference type="SMART" id="SM00662">
    <property type="entry name" value="RPOLD"/>
    <property type="match status" value="1"/>
</dbReference>
<dbReference type="SUPFAM" id="SSF47789">
    <property type="entry name" value="C-terminal domain of RNA polymerase alpha subunit"/>
    <property type="match status" value="1"/>
</dbReference>
<dbReference type="SUPFAM" id="SSF56553">
    <property type="entry name" value="Insert subdomain of RNA polymerase alpha subunit"/>
    <property type="match status" value="1"/>
</dbReference>
<dbReference type="SUPFAM" id="SSF55257">
    <property type="entry name" value="RBP11-like subunits of RNA polymerase"/>
    <property type="match status" value="1"/>
</dbReference>
<evidence type="ECO:0000255" key="1">
    <source>
        <dbReference type="HAMAP-Rule" id="MF_00059"/>
    </source>
</evidence>
<feature type="chain" id="PRO_0000296860" description="DNA-directed RNA polymerase subunit alpha">
    <location>
        <begin position="1"/>
        <end position="326"/>
    </location>
</feature>
<feature type="region of interest" description="Alpha N-terminal domain (alpha-NTD)" evidence="1">
    <location>
        <begin position="1"/>
        <end position="231"/>
    </location>
</feature>
<feature type="region of interest" description="Alpha C-terminal domain (alpha-CTD)" evidence="1">
    <location>
        <begin position="247"/>
        <end position="326"/>
    </location>
</feature>
<accession>Q0K645</accession>
<proteinExistence type="inferred from homology"/>
<name>RPOA_CUPNH</name>
<organism>
    <name type="scientific">Cupriavidus necator (strain ATCC 17699 / DSM 428 / KCTC 22496 / NCIMB 10442 / H16 / Stanier 337)</name>
    <name type="common">Ralstonia eutropha</name>
    <dbReference type="NCBI Taxonomy" id="381666"/>
    <lineage>
        <taxon>Bacteria</taxon>
        <taxon>Pseudomonadati</taxon>
        <taxon>Pseudomonadota</taxon>
        <taxon>Betaproteobacteria</taxon>
        <taxon>Burkholderiales</taxon>
        <taxon>Burkholderiaceae</taxon>
        <taxon>Cupriavidus</taxon>
    </lineage>
</organism>
<reference key="1">
    <citation type="journal article" date="2006" name="Nat. Biotechnol.">
        <title>Genome sequence of the bioplastic-producing 'Knallgas' bacterium Ralstonia eutropha H16.</title>
        <authorList>
            <person name="Pohlmann A."/>
            <person name="Fricke W.F."/>
            <person name="Reinecke F."/>
            <person name="Kusian B."/>
            <person name="Liesegang H."/>
            <person name="Cramm R."/>
            <person name="Eitinger T."/>
            <person name="Ewering C."/>
            <person name="Poetter M."/>
            <person name="Schwartz E."/>
            <person name="Strittmatter A."/>
            <person name="Voss I."/>
            <person name="Gottschalk G."/>
            <person name="Steinbuechel A."/>
            <person name="Friedrich B."/>
            <person name="Bowien B."/>
        </authorList>
    </citation>
    <scope>NUCLEOTIDE SEQUENCE [LARGE SCALE GENOMIC DNA]</scope>
    <source>
        <strain>ATCC 17699 / DSM 428 / KCTC 22496 / NCIMB 10442 / H16 / Stanier 337</strain>
    </source>
</reference>
<comment type="function">
    <text evidence="1">DNA-dependent RNA polymerase catalyzes the transcription of DNA into RNA using the four ribonucleoside triphosphates as substrates.</text>
</comment>
<comment type="catalytic activity">
    <reaction evidence="1">
        <text>RNA(n) + a ribonucleoside 5'-triphosphate = RNA(n+1) + diphosphate</text>
        <dbReference type="Rhea" id="RHEA:21248"/>
        <dbReference type="Rhea" id="RHEA-COMP:14527"/>
        <dbReference type="Rhea" id="RHEA-COMP:17342"/>
        <dbReference type="ChEBI" id="CHEBI:33019"/>
        <dbReference type="ChEBI" id="CHEBI:61557"/>
        <dbReference type="ChEBI" id="CHEBI:140395"/>
        <dbReference type="EC" id="2.7.7.6"/>
    </reaction>
</comment>
<comment type="subunit">
    <text evidence="1">Homodimer. The RNAP catalytic core consists of 2 alpha, 1 beta, 1 beta' and 1 omega subunit. When a sigma factor is associated with the core the holoenzyme is formed, which can initiate transcription.</text>
</comment>
<comment type="domain">
    <text evidence="1">The N-terminal domain is essential for RNAP assembly and basal transcription, whereas the C-terminal domain is involved in interaction with transcriptional regulators and with upstream promoter elements.</text>
</comment>
<comment type="similarity">
    <text evidence="1">Belongs to the RNA polymerase alpha chain family.</text>
</comment>
<sequence>MQTALLKPKIIAVEPLGDHHAKVVMEPFERGYGHTLGNALRRVLLSSMVGYAPTEVTIAGVVHEYSTIDGVQEDVVNLLLNLKGVVFKLHNRDEVTVSLRKDGEGVVTAADIELPHDVEIINPNHVIAHLSAGGKLDMQIKVEQGRGYVPGNVRKFGDESGKVIGRIVLDASFSPVRRVSYAVESARVEQRTDLDKLVMNIETDGVISPEEAIRQSARILVDQLSVFAALEGTESAAEAASSRTPQIDPILLRPVDDLELTVRSANCLKAENIYYIGDLIQRTENELLKTPNLGRKSLNEIKEVLASRGLTLGMKLENWPPAGLEK</sequence>
<keyword id="KW-0240">DNA-directed RNA polymerase</keyword>
<keyword id="KW-0548">Nucleotidyltransferase</keyword>
<keyword id="KW-1185">Reference proteome</keyword>
<keyword id="KW-0804">Transcription</keyword>
<keyword id="KW-0808">Transferase</keyword>
<protein>
    <recommendedName>
        <fullName evidence="1">DNA-directed RNA polymerase subunit alpha</fullName>
        <shortName evidence="1">RNAP subunit alpha</shortName>
        <ecNumber evidence="1">2.7.7.6</ecNumber>
    </recommendedName>
    <alternativeName>
        <fullName evidence="1">RNA polymerase subunit alpha</fullName>
    </alternativeName>
    <alternativeName>
        <fullName evidence="1">Transcriptase subunit alpha</fullName>
    </alternativeName>
</protein>